<comment type="function">
    <text evidence="1 2 7">Facilitates the ubiquitin-independent proteasomal degradation of stimulus-induced transcription factors such as FOSB, EGR1, NR4A1, and IRF4 to the proteasome for degradation (By similarity). Promotes also the degradation of other substrates such as CBX4 (PubMed:27326929). Plays a role in inhibiting the activity of glucokinase GCK and both glucose-induced and basal insulin secretion (By similarity).</text>
</comment>
<comment type="subunit">
    <text evidence="1 2">Interacts with GCK; the interaction occurs preferentially at low glucose levels. Interacts with the proteasome.</text>
</comment>
<comment type="subcellular location">
    <subcellularLocation>
        <location evidence="5 6">Nucleus</location>
    </subcellularLocation>
    <subcellularLocation>
        <location evidence="6">Cytoplasm</location>
        <location evidence="6">Cytosol</location>
    </subcellularLocation>
    <subcellularLocation>
        <location evidence="5">Nucleus</location>
        <location evidence="5">Nucleolus</location>
    </subcellularLocation>
    <text evidence="5 6">Detected in the nucleus and nucleolus with no expression in the cytoplasm (PubMed:10974535). However, a later study finds expression in the nucleus and cytoplasm with no expression in the nucleolus (PubMed:24187134).</text>
</comment>
<comment type="alternative products">
    <event type="alternative splicing"/>
    <isoform>
        <id>Q3TPJ7-1</id>
        <name>1</name>
        <sequence type="displayed"/>
    </isoform>
    <isoform>
        <id>Q3TPJ7-2</id>
        <name>2</name>
        <sequence type="described" ref="VSP_025552"/>
    </isoform>
    <isoform>
        <id>Q3TPJ7-3</id>
        <name>3</name>
        <sequence type="described" ref="VSP_025552 VSP_025553"/>
    </isoform>
</comment>
<comment type="tissue specificity">
    <text evidence="6">Expressed at high levels in brain and liver with significantly lower levels in muscle.</text>
</comment>
<comment type="developmental stage">
    <text evidence="5">Strongly expressed at the mesencephalon (midbrain) of 12.5 dpc embryos.</text>
</comment>
<sequence length="465" mass="49192">MEPQPGGARSCRRGAPGGACELNTATESAAPMSLAIHSTTGTRYDLSVPHDETVEGLRKRLSQRLKVPKERLALLHKDTRLSSGKLQEFGVGDGSKLTLVPTVEAGLMSQASRPEQSVMQALESLTETQVSDFLSGRSPLTLALRVGDHMMFVQLQLAAQHAPLQHRHVLAAAAAAAAAARGDSSVATPVSSPCRPVSSAARVPPVSSSPSSPVSPSPVTAGSFRSHAASTTCPEQMDCSPPASSSSTSTPGSSPTPRSRKPGAVIESFVNHAPGVFSGTFSGTLHPNCQDSSGRPRRDIGTILQILNDLLSATRHYQGMPPSLTQLRCHAQCSPASPAPDLTPKTTSCEKLAATSSTSLLQGQSQIRMCKPPGDRLRQTENRATRCKVERLQLLLQQKRLRRKARRDARGPYHWTPSRKAGRSDSSSSGGGGGPSEATGLGLDFEDSVWKPEVNPDIQSEFVVA</sequence>
<proteinExistence type="evidence at transcript level"/>
<gene>
    <name type="primary">Midn</name>
</gene>
<name>MIDN_MOUSE</name>
<organism>
    <name type="scientific">Mus musculus</name>
    <name type="common">Mouse</name>
    <dbReference type="NCBI Taxonomy" id="10090"/>
    <lineage>
        <taxon>Eukaryota</taxon>
        <taxon>Metazoa</taxon>
        <taxon>Chordata</taxon>
        <taxon>Craniata</taxon>
        <taxon>Vertebrata</taxon>
        <taxon>Euteleostomi</taxon>
        <taxon>Mammalia</taxon>
        <taxon>Eutheria</taxon>
        <taxon>Euarchontoglires</taxon>
        <taxon>Glires</taxon>
        <taxon>Rodentia</taxon>
        <taxon>Myomorpha</taxon>
        <taxon>Muroidea</taxon>
        <taxon>Muridae</taxon>
        <taxon>Murinae</taxon>
        <taxon>Mus</taxon>
        <taxon>Mus</taxon>
    </lineage>
</organism>
<protein>
    <recommendedName>
        <fullName>Midnolin</fullName>
    </recommendedName>
    <alternativeName>
        <fullName>Midbrain nucleolar protein</fullName>
    </alternativeName>
</protein>
<keyword id="KW-0025">Alternative splicing</keyword>
<keyword id="KW-0963">Cytoplasm</keyword>
<keyword id="KW-0539">Nucleus</keyword>
<keyword id="KW-1185">Reference proteome</keyword>
<evidence type="ECO:0000250" key="1">
    <source>
        <dbReference type="UniProtKB" id="D4AE48"/>
    </source>
</evidence>
<evidence type="ECO:0000250" key="2">
    <source>
        <dbReference type="UniProtKB" id="Q504T8"/>
    </source>
</evidence>
<evidence type="ECO:0000255" key="3">
    <source>
        <dbReference type="PROSITE-ProRule" id="PRU00214"/>
    </source>
</evidence>
<evidence type="ECO:0000256" key="4">
    <source>
        <dbReference type="SAM" id="MobiDB-lite"/>
    </source>
</evidence>
<evidence type="ECO:0000269" key="5">
    <source>
    </source>
</evidence>
<evidence type="ECO:0000269" key="6">
    <source>
    </source>
</evidence>
<evidence type="ECO:0000269" key="7">
    <source>
    </source>
</evidence>
<evidence type="ECO:0000303" key="8">
    <source>
    </source>
</evidence>
<evidence type="ECO:0000303" key="9">
    <source>
    </source>
</evidence>
<evidence type="ECO:0000303" key="10">
    <source>
    </source>
</evidence>
<feature type="chain" id="PRO_0000287537" description="Midnolin">
    <location>
        <begin position="1"/>
        <end position="465"/>
    </location>
</feature>
<feature type="domain" description="Ubiquitin-like" evidence="3">
    <location>
        <begin position="32"/>
        <end position="106"/>
    </location>
</feature>
<feature type="region of interest" description="Disordered" evidence="4">
    <location>
        <begin position="185"/>
        <end position="262"/>
    </location>
</feature>
<feature type="region of interest" description="Required for nucleolar localization" evidence="5">
    <location>
        <begin position="397"/>
        <end position="424"/>
    </location>
</feature>
<feature type="region of interest" description="Disordered" evidence="4">
    <location>
        <begin position="400"/>
        <end position="445"/>
    </location>
</feature>
<feature type="compositionally biased region" description="Low complexity" evidence="4">
    <location>
        <begin position="195"/>
        <end position="219"/>
    </location>
</feature>
<feature type="compositionally biased region" description="Low complexity" evidence="4">
    <location>
        <begin position="240"/>
        <end position="257"/>
    </location>
</feature>
<feature type="splice variant" id="VSP_025552" description="In isoform 2 and isoform 3." evidence="8 9 10">
    <original>T</original>
    <variation>TQPPATPGPGRAAGGGFRKYRLILFKRPWHRQGPQSPERGGERP</variation>
    <location>
        <position position="128"/>
    </location>
</feature>
<feature type="splice variant" id="VSP_025553" description="In isoform 3." evidence="10">
    <location>
        <position position="236"/>
    </location>
</feature>
<reference key="1">
    <citation type="journal article" date="2000" name="Gene">
        <title>Novel nucleolar protein, midnolin, is expressed in the mesencephalon during mouse development.</title>
        <authorList>
            <person name="Tsukahara M."/>
            <person name="Suemori H."/>
            <person name="Noguchi S."/>
            <person name="Ji Z.-S."/>
            <person name="Tsunoo H."/>
        </authorList>
    </citation>
    <scope>NUCLEOTIDE SEQUENCE [MRNA] (ISOFORM 2)</scope>
    <scope>SUBCELLULAR LOCATION</scope>
    <scope>DEVELOPMENTAL STAGE</scope>
    <source>
        <strain>C57BL/6J</strain>
        <tissue>CNS</tissue>
    </source>
</reference>
<reference key="2">
    <citation type="journal article" date="2005" name="Science">
        <title>The transcriptional landscape of the mammalian genome.</title>
        <authorList>
            <person name="Carninci P."/>
            <person name="Kasukawa T."/>
            <person name="Katayama S."/>
            <person name="Gough J."/>
            <person name="Frith M.C."/>
            <person name="Maeda N."/>
            <person name="Oyama R."/>
            <person name="Ravasi T."/>
            <person name="Lenhard B."/>
            <person name="Wells C."/>
            <person name="Kodzius R."/>
            <person name="Shimokawa K."/>
            <person name="Bajic V.B."/>
            <person name="Brenner S.E."/>
            <person name="Batalov S."/>
            <person name="Forrest A.R."/>
            <person name="Zavolan M."/>
            <person name="Davis M.J."/>
            <person name="Wilming L.G."/>
            <person name="Aidinis V."/>
            <person name="Allen J.E."/>
            <person name="Ambesi-Impiombato A."/>
            <person name="Apweiler R."/>
            <person name="Aturaliya R.N."/>
            <person name="Bailey T.L."/>
            <person name="Bansal M."/>
            <person name="Baxter L."/>
            <person name="Beisel K.W."/>
            <person name="Bersano T."/>
            <person name="Bono H."/>
            <person name="Chalk A.M."/>
            <person name="Chiu K.P."/>
            <person name="Choudhary V."/>
            <person name="Christoffels A."/>
            <person name="Clutterbuck D.R."/>
            <person name="Crowe M.L."/>
            <person name="Dalla E."/>
            <person name="Dalrymple B.P."/>
            <person name="de Bono B."/>
            <person name="Della Gatta G."/>
            <person name="di Bernardo D."/>
            <person name="Down T."/>
            <person name="Engstrom P."/>
            <person name="Fagiolini M."/>
            <person name="Faulkner G."/>
            <person name="Fletcher C.F."/>
            <person name="Fukushima T."/>
            <person name="Furuno M."/>
            <person name="Futaki S."/>
            <person name="Gariboldi M."/>
            <person name="Georgii-Hemming P."/>
            <person name="Gingeras T.R."/>
            <person name="Gojobori T."/>
            <person name="Green R.E."/>
            <person name="Gustincich S."/>
            <person name="Harbers M."/>
            <person name="Hayashi Y."/>
            <person name="Hensch T.K."/>
            <person name="Hirokawa N."/>
            <person name="Hill D."/>
            <person name="Huminiecki L."/>
            <person name="Iacono M."/>
            <person name="Ikeo K."/>
            <person name="Iwama A."/>
            <person name="Ishikawa T."/>
            <person name="Jakt M."/>
            <person name="Kanapin A."/>
            <person name="Katoh M."/>
            <person name="Kawasawa Y."/>
            <person name="Kelso J."/>
            <person name="Kitamura H."/>
            <person name="Kitano H."/>
            <person name="Kollias G."/>
            <person name="Krishnan S.P."/>
            <person name="Kruger A."/>
            <person name="Kummerfeld S.K."/>
            <person name="Kurochkin I.V."/>
            <person name="Lareau L.F."/>
            <person name="Lazarevic D."/>
            <person name="Lipovich L."/>
            <person name="Liu J."/>
            <person name="Liuni S."/>
            <person name="McWilliam S."/>
            <person name="Madan Babu M."/>
            <person name="Madera M."/>
            <person name="Marchionni L."/>
            <person name="Matsuda H."/>
            <person name="Matsuzawa S."/>
            <person name="Miki H."/>
            <person name="Mignone F."/>
            <person name="Miyake S."/>
            <person name="Morris K."/>
            <person name="Mottagui-Tabar S."/>
            <person name="Mulder N."/>
            <person name="Nakano N."/>
            <person name="Nakauchi H."/>
            <person name="Ng P."/>
            <person name="Nilsson R."/>
            <person name="Nishiguchi S."/>
            <person name="Nishikawa S."/>
            <person name="Nori F."/>
            <person name="Ohara O."/>
            <person name="Okazaki Y."/>
            <person name="Orlando V."/>
            <person name="Pang K.C."/>
            <person name="Pavan W.J."/>
            <person name="Pavesi G."/>
            <person name="Pesole G."/>
            <person name="Petrovsky N."/>
            <person name="Piazza S."/>
            <person name="Reed J."/>
            <person name="Reid J.F."/>
            <person name="Ring B.Z."/>
            <person name="Ringwald M."/>
            <person name="Rost B."/>
            <person name="Ruan Y."/>
            <person name="Salzberg S.L."/>
            <person name="Sandelin A."/>
            <person name="Schneider C."/>
            <person name="Schoenbach C."/>
            <person name="Sekiguchi K."/>
            <person name="Semple C.A."/>
            <person name="Seno S."/>
            <person name="Sessa L."/>
            <person name="Sheng Y."/>
            <person name="Shibata Y."/>
            <person name="Shimada H."/>
            <person name="Shimada K."/>
            <person name="Silva D."/>
            <person name="Sinclair B."/>
            <person name="Sperling S."/>
            <person name="Stupka E."/>
            <person name="Sugiura K."/>
            <person name="Sultana R."/>
            <person name="Takenaka Y."/>
            <person name="Taki K."/>
            <person name="Tammoja K."/>
            <person name="Tan S.L."/>
            <person name="Tang S."/>
            <person name="Taylor M.S."/>
            <person name="Tegner J."/>
            <person name="Teichmann S.A."/>
            <person name="Ueda H.R."/>
            <person name="van Nimwegen E."/>
            <person name="Verardo R."/>
            <person name="Wei C.L."/>
            <person name="Yagi K."/>
            <person name="Yamanishi H."/>
            <person name="Zabarovsky E."/>
            <person name="Zhu S."/>
            <person name="Zimmer A."/>
            <person name="Hide W."/>
            <person name="Bult C."/>
            <person name="Grimmond S.M."/>
            <person name="Teasdale R.D."/>
            <person name="Liu E.T."/>
            <person name="Brusic V."/>
            <person name="Quackenbush J."/>
            <person name="Wahlestedt C."/>
            <person name="Mattick J.S."/>
            <person name="Hume D.A."/>
            <person name="Kai C."/>
            <person name="Sasaki D."/>
            <person name="Tomaru Y."/>
            <person name="Fukuda S."/>
            <person name="Kanamori-Katayama M."/>
            <person name="Suzuki M."/>
            <person name="Aoki J."/>
            <person name="Arakawa T."/>
            <person name="Iida J."/>
            <person name="Imamura K."/>
            <person name="Itoh M."/>
            <person name="Kato T."/>
            <person name="Kawaji H."/>
            <person name="Kawagashira N."/>
            <person name="Kawashima T."/>
            <person name="Kojima M."/>
            <person name="Kondo S."/>
            <person name="Konno H."/>
            <person name="Nakano K."/>
            <person name="Ninomiya N."/>
            <person name="Nishio T."/>
            <person name="Okada M."/>
            <person name="Plessy C."/>
            <person name="Shibata K."/>
            <person name="Shiraki T."/>
            <person name="Suzuki S."/>
            <person name="Tagami M."/>
            <person name="Waki K."/>
            <person name="Watahiki A."/>
            <person name="Okamura-Oho Y."/>
            <person name="Suzuki H."/>
            <person name="Kawai J."/>
            <person name="Hayashizaki Y."/>
        </authorList>
    </citation>
    <scope>NUCLEOTIDE SEQUENCE [LARGE SCALE MRNA] (ISOFORMS 1 AND 3)</scope>
    <source>
        <strain>C57BL/6J</strain>
        <strain>NOD</strain>
        <tissue>Spinal ganglion</tissue>
    </source>
</reference>
<reference key="3">
    <citation type="journal article" date="2004" name="Genome Res.">
        <title>The status, quality, and expansion of the NIH full-length cDNA project: the Mammalian Gene Collection (MGC).</title>
        <authorList>
            <consortium name="The MGC Project Team"/>
        </authorList>
    </citation>
    <scope>NUCLEOTIDE SEQUENCE [LARGE SCALE MRNA] (ISOFORM 2)</scope>
    <source>
        <strain>FVB/N</strain>
        <tissue>Mammary tumor</tissue>
    </source>
</reference>
<reference key="4">
    <citation type="journal article" date="2013" name="J. Biol. Chem.">
        <title>Identification of the ubiquitin-like domain of midnolin as a new glucokinase interaction partner.</title>
        <authorList>
            <person name="Hofmeister-Brix A."/>
            <person name="Kollmann K."/>
            <person name="Langer S."/>
            <person name="Schultz J."/>
            <person name="Lenzen S."/>
            <person name="Baltrusch S."/>
        </authorList>
    </citation>
    <scope>SUBCELLULAR LOCATION</scope>
    <scope>TISSUE SPECIFICITY</scope>
</reference>
<reference key="5">
    <citation type="journal article" date="2016" name="Dev. Cell">
        <title>Stuxnet facilitates the degradation of polycomb protein during development.</title>
        <authorList>
            <person name="Du J."/>
            <person name="Zhang J."/>
            <person name="He T."/>
            <person name="Li Y."/>
            <person name="Su Y."/>
            <person name="Tie F."/>
            <person name="Liu M."/>
            <person name="Harte P.J."/>
            <person name="Zhu A.J."/>
        </authorList>
    </citation>
    <scope>FUNCTION</scope>
</reference>
<accession>Q3TPJ7</accession>
<accession>Q3U3X5</accession>
<accession>Q9JJJ6</accession>
<dbReference type="EMBL" id="AB036882">
    <property type="protein sequence ID" value="BAB00638.1"/>
    <property type="molecule type" value="mRNA"/>
</dbReference>
<dbReference type="EMBL" id="AK154535">
    <property type="protein sequence ID" value="BAE32660.1"/>
    <property type="molecule type" value="mRNA"/>
</dbReference>
<dbReference type="EMBL" id="AK164324">
    <property type="protein sequence ID" value="BAE37739.1"/>
    <property type="molecule type" value="mRNA"/>
</dbReference>
<dbReference type="EMBL" id="BC034719">
    <property type="protein sequence ID" value="AAH34719.1"/>
    <property type="molecule type" value="mRNA"/>
</dbReference>
<dbReference type="CCDS" id="CCDS24011.1">
    <molecule id="Q3TPJ7-2"/>
</dbReference>
<dbReference type="CCDS" id="CCDS83727.1">
    <molecule id="Q3TPJ7-1"/>
</dbReference>
<dbReference type="RefSeq" id="NP_001292727.1">
    <property type="nucleotide sequence ID" value="NM_001305798.1"/>
</dbReference>
<dbReference type="RefSeq" id="NP_001292728.1">
    <molecule id="Q3TPJ7-3"/>
    <property type="nucleotide sequence ID" value="NM_001305799.2"/>
</dbReference>
<dbReference type="RefSeq" id="NP_001334046.1">
    <molecule id="Q3TPJ7-1"/>
    <property type="nucleotide sequence ID" value="NM_001347117.1"/>
</dbReference>
<dbReference type="RefSeq" id="NP_001375405.1">
    <molecule id="Q3TPJ7-1"/>
    <property type="nucleotide sequence ID" value="NM_001388476.1"/>
</dbReference>
<dbReference type="RefSeq" id="NP_001375406.1">
    <molecule id="Q3TPJ7-1"/>
    <property type="nucleotide sequence ID" value="NM_001388477.1"/>
</dbReference>
<dbReference type="RefSeq" id="NP_001375407.1">
    <molecule id="Q3TPJ7-3"/>
    <property type="nucleotide sequence ID" value="NM_001388478.1"/>
</dbReference>
<dbReference type="RefSeq" id="NP_067540.1">
    <molecule id="Q3TPJ7-2"/>
    <property type="nucleotide sequence ID" value="NM_021565.2"/>
</dbReference>
<dbReference type="RefSeq" id="XP_006513976.1">
    <molecule id="Q3TPJ7-2"/>
    <property type="nucleotide sequence ID" value="XM_006513913.4"/>
</dbReference>
<dbReference type="RefSeq" id="XP_017169524.1">
    <property type="nucleotide sequence ID" value="XM_017314035.1"/>
</dbReference>
<dbReference type="SMR" id="Q3TPJ7"/>
<dbReference type="BioGRID" id="208525">
    <property type="interactions" value="1"/>
</dbReference>
<dbReference type="FunCoup" id="Q3TPJ7">
    <property type="interactions" value="2940"/>
</dbReference>
<dbReference type="STRING" id="10090.ENSMUSP00000046967"/>
<dbReference type="GlyGen" id="Q3TPJ7">
    <property type="glycosylation" value="2 sites, 1 O-linked glycan (1 site)"/>
</dbReference>
<dbReference type="iPTMnet" id="Q3TPJ7"/>
<dbReference type="PhosphoSitePlus" id="Q3TPJ7"/>
<dbReference type="PaxDb" id="10090-ENSMUSP00000046967"/>
<dbReference type="PeptideAtlas" id="Q3TPJ7"/>
<dbReference type="ProteomicsDB" id="295906">
    <molecule id="Q3TPJ7-1"/>
</dbReference>
<dbReference type="ProteomicsDB" id="295907">
    <molecule id="Q3TPJ7-2"/>
</dbReference>
<dbReference type="ProteomicsDB" id="295908">
    <molecule id="Q3TPJ7-3"/>
</dbReference>
<dbReference type="Antibodypedia" id="22621">
    <property type="antibodies" value="117 antibodies from 17 providers"/>
</dbReference>
<dbReference type="Ensembl" id="ENSMUST00000042057.12">
    <molecule id="Q3TPJ7-2"/>
    <property type="protein sequence ID" value="ENSMUSP00000046967.6"/>
    <property type="gene ID" value="ENSMUSG00000035621.14"/>
</dbReference>
<dbReference type="Ensembl" id="ENSMUST00000099492.10">
    <molecule id="Q3TPJ7-1"/>
    <property type="protein sequence ID" value="ENSMUSP00000097091.4"/>
    <property type="gene ID" value="ENSMUSG00000035621.14"/>
</dbReference>
<dbReference type="GeneID" id="59090"/>
<dbReference type="KEGG" id="mmu:59090"/>
<dbReference type="UCSC" id="uc007gca.2">
    <molecule id="Q3TPJ7-2"/>
    <property type="organism name" value="mouse"/>
</dbReference>
<dbReference type="UCSC" id="uc007gcb.2">
    <molecule id="Q3TPJ7-1"/>
    <property type="organism name" value="mouse"/>
</dbReference>
<dbReference type="UCSC" id="uc007gcc.2">
    <molecule id="Q3TPJ7-3"/>
    <property type="organism name" value="mouse"/>
</dbReference>
<dbReference type="AGR" id="MGI:1890222"/>
<dbReference type="CTD" id="90007"/>
<dbReference type="MGI" id="MGI:1890222">
    <property type="gene designation" value="Midn"/>
</dbReference>
<dbReference type="VEuPathDB" id="HostDB:ENSMUSG00000035621"/>
<dbReference type="eggNOG" id="ENOG502QTDX">
    <property type="taxonomic scope" value="Eukaryota"/>
</dbReference>
<dbReference type="GeneTree" id="ENSGT00510000049027"/>
<dbReference type="HOGENOM" id="CLU_029882_0_0_1"/>
<dbReference type="InParanoid" id="Q3TPJ7"/>
<dbReference type="OMA" id="PSHDIGQ"/>
<dbReference type="OrthoDB" id="81127at9989"/>
<dbReference type="PhylomeDB" id="Q3TPJ7"/>
<dbReference type="TreeFam" id="TF329735"/>
<dbReference type="BioGRID-ORCS" id="59090">
    <property type="hits" value="6 hits in 62 CRISPR screens"/>
</dbReference>
<dbReference type="ChiTaRS" id="Midn">
    <property type="organism name" value="mouse"/>
</dbReference>
<dbReference type="PRO" id="PR:Q3TPJ7"/>
<dbReference type="Proteomes" id="UP000000589">
    <property type="component" value="Chromosome 10"/>
</dbReference>
<dbReference type="RNAct" id="Q3TPJ7">
    <property type="molecule type" value="protein"/>
</dbReference>
<dbReference type="Bgee" id="ENSMUSG00000035621">
    <property type="expression patterns" value="Expressed in ileal epithelium and 259 other cell types or tissues"/>
</dbReference>
<dbReference type="ExpressionAtlas" id="Q3TPJ7">
    <property type="expression patterns" value="baseline and differential"/>
</dbReference>
<dbReference type="GO" id="GO:0005829">
    <property type="term" value="C:cytosol"/>
    <property type="evidence" value="ECO:0000314"/>
    <property type="project" value="MGI"/>
</dbReference>
<dbReference type="GO" id="GO:0005730">
    <property type="term" value="C:nucleolus"/>
    <property type="evidence" value="ECO:0000314"/>
    <property type="project" value="MGI"/>
</dbReference>
<dbReference type="GO" id="GO:0005634">
    <property type="term" value="C:nucleus"/>
    <property type="evidence" value="ECO:0000314"/>
    <property type="project" value="MGI"/>
</dbReference>
<dbReference type="GO" id="GO:0019900">
    <property type="term" value="F:kinase binding"/>
    <property type="evidence" value="ECO:0000266"/>
    <property type="project" value="MGI"/>
</dbReference>
<dbReference type="GO" id="GO:0046676">
    <property type="term" value="P:negative regulation of insulin secretion"/>
    <property type="evidence" value="ECO:0000266"/>
    <property type="project" value="MGI"/>
</dbReference>
<dbReference type="CDD" id="cd01804">
    <property type="entry name" value="Ubl_midnolin"/>
    <property type="match status" value="1"/>
</dbReference>
<dbReference type="FunFam" id="3.10.20.90:FF:000180">
    <property type="entry name" value="midnolin isoform X1"/>
    <property type="match status" value="1"/>
</dbReference>
<dbReference type="Gene3D" id="3.10.20.90">
    <property type="entry name" value="Phosphatidylinositol 3-kinase Catalytic Subunit, Chain A, domain 1"/>
    <property type="match status" value="1"/>
</dbReference>
<dbReference type="InterPro" id="IPR039336">
    <property type="entry name" value="Midnolin"/>
</dbReference>
<dbReference type="InterPro" id="IPR000626">
    <property type="entry name" value="Ubiquitin-like_dom"/>
</dbReference>
<dbReference type="InterPro" id="IPR029071">
    <property type="entry name" value="Ubiquitin-like_domsf"/>
</dbReference>
<dbReference type="PANTHER" id="PTHR23010">
    <property type="entry name" value="MIDNOLIN"/>
    <property type="match status" value="1"/>
</dbReference>
<dbReference type="PANTHER" id="PTHR23010:SF1">
    <property type="entry name" value="MIDNOLIN"/>
    <property type="match status" value="1"/>
</dbReference>
<dbReference type="Pfam" id="PF00240">
    <property type="entry name" value="ubiquitin"/>
    <property type="match status" value="1"/>
</dbReference>
<dbReference type="SMART" id="SM00213">
    <property type="entry name" value="UBQ"/>
    <property type="match status" value="1"/>
</dbReference>
<dbReference type="SUPFAM" id="SSF54236">
    <property type="entry name" value="Ubiquitin-like"/>
    <property type="match status" value="1"/>
</dbReference>
<dbReference type="PROSITE" id="PS50053">
    <property type="entry name" value="UBIQUITIN_2"/>
    <property type="match status" value="1"/>
</dbReference>